<proteinExistence type="inferred from homology"/>
<protein>
    <recommendedName>
        <fullName evidence="1">Glycine cleavage system H protein</fullName>
    </recommendedName>
</protein>
<feature type="chain" id="PRO_1000114554" description="Glycine cleavage system H protein">
    <location>
        <begin position="1"/>
        <end position="131"/>
    </location>
</feature>
<feature type="domain" description="Lipoyl-binding" evidence="2">
    <location>
        <begin position="24"/>
        <end position="106"/>
    </location>
</feature>
<feature type="modified residue" description="N6-lipoyllysine" evidence="1">
    <location>
        <position position="65"/>
    </location>
</feature>
<keyword id="KW-0450">Lipoyl</keyword>
<organism>
    <name type="scientific">Stenotrophomonas maltophilia (strain R551-3)</name>
    <dbReference type="NCBI Taxonomy" id="391008"/>
    <lineage>
        <taxon>Bacteria</taxon>
        <taxon>Pseudomonadati</taxon>
        <taxon>Pseudomonadota</taxon>
        <taxon>Gammaproteobacteria</taxon>
        <taxon>Lysobacterales</taxon>
        <taxon>Lysobacteraceae</taxon>
        <taxon>Stenotrophomonas</taxon>
        <taxon>Stenotrophomonas maltophilia group</taxon>
    </lineage>
</organism>
<gene>
    <name evidence="1" type="primary">gcvH</name>
    <name type="ordered locus">Smal_3072</name>
</gene>
<comment type="function">
    <text evidence="1">The glycine cleavage system catalyzes the degradation of glycine. The H protein shuttles the methylamine group of glycine from the P protein to the T protein.</text>
</comment>
<comment type="cofactor">
    <cofactor evidence="1">
        <name>(R)-lipoate</name>
        <dbReference type="ChEBI" id="CHEBI:83088"/>
    </cofactor>
    <text evidence="1">Binds 1 lipoyl cofactor covalently.</text>
</comment>
<comment type="subunit">
    <text evidence="1">The glycine cleavage system is composed of four proteins: P, T, L and H.</text>
</comment>
<comment type="similarity">
    <text evidence="1">Belongs to the GcvH family.</text>
</comment>
<sequence>MSEIPGDLKFLKSHEWARVEGNGRVTVGISDHAQGLLGDLVYVELPEVGATAKANEQIAVVESVKAASDVYSPVSGTIVEVNSALSDKPETINEDAYGDGWMYVVELSNAEELNELLDPDAYAEALEDEDH</sequence>
<evidence type="ECO:0000255" key="1">
    <source>
        <dbReference type="HAMAP-Rule" id="MF_00272"/>
    </source>
</evidence>
<evidence type="ECO:0000255" key="2">
    <source>
        <dbReference type="PROSITE-ProRule" id="PRU01066"/>
    </source>
</evidence>
<reference key="1">
    <citation type="submission" date="2008-06" db="EMBL/GenBank/DDBJ databases">
        <title>Complete sequence of Stenotrophomonas maltophilia R551-3.</title>
        <authorList>
            <consortium name="US DOE Joint Genome Institute"/>
            <person name="Lucas S."/>
            <person name="Copeland A."/>
            <person name="Lapidus A."/>
            <person name="Glavina del Rio T."/>
            <person name="Dalin E."/>
            <person name="Tice H."/>
            <person name="Pitluck S."/>
            <person name="Chain P."/>
            <person name="Malfatti S."/>
            <person name="Shin M."/>
            <person name="Vergez L."/>
            <person name="Lang D."/>
            <person name="Schmutz J."/>
            <person name="Larimer F."/>
            <person name="Land M."/>
            <person name="Hauser L."/>
            <person name="Kyrpides N."/>
            <person name="Mikhailova N."/>
            <person name="Taghavi S."/>
            <person name="Monchy S."/>
            <person name="Newman L."/>
            <person name="Vangronsveld J."/>
            <person name="van der Lelie D."/>
            <person name="Richardson P."/>
        </authorList>
    </citation>
    <scope>NUCLEOTIDE SEQUENCE [LARGE SCALE GENOMIC DNA]</scope>
    <source>
        <strain>R551-3</strain>
    </source>
</reference>
<name>GCSH_STRM5</name>
<accession>B4SSD9</accession>
<dbReference type="EMBL" id="CP001111">
    <property type="protein sequence ID" value="ACF52771.1"/>
    <property type="molecule type" value="Genomic_DNA"/>
</dbReference>
<dbReference type="RefSeq" id="WP_012511867.1">
    <property type="nucleotide sequence ID" value="NC_011071.1"/>
</dbReference>
<dbReference type="SMR" id="B4SSD9"/>
<dbReference type="STRING" id="391008.Smal_3072"/>
<dbReference type="KEGG" id="smt:Smal_3072"/>
<dbReference type="eggNOG" id="COG0509">
    <property type="taxonomic scope" value="Bacteria"/>
</dbReference>
<dbReference type="HOGENOM" id="CLU_097408_2_0_6"/>
<dbReference type="OrthoDB" id="9796712at2"/>
<dbReference type="Proteomes" id="UP000001867">
    <property type="component" value="Chromosome"/>
</dbReference>
<dbReference type="GO" id="GO:0005829">
    <property type="term" value="C:cytosol"/>
    <property type="evidence" value="ECO:0007669"/>
    <property type="project" value="TreeGrafter"/>
</dbReference>
<dbReference type="GO" id="GO:0005960">
    <property type="term" value="C:glycine cleavage complex"/>
    <property type="evidence" value="ECO:0007669"/>
    <property type="project" value="InterPro"/>
</dbReference>
<dbReference type="GO" id="GO:0019464">
    <property type="term" value="P:glycine decarboxylation via glycine cleavage system"/>
    <property type="evidence" value="ECO:0007669"/>
    <property type="project" value="UniProtKB-UniRule"/>
</dbReference>
<dbReference type="CDD" id="cd06848">
    <property type="entry name" value="GCS_H"/>
    <property type="match status" value="1"/>
</dbReference>
<dbReference type="Gene3D" id="2.40.50.100">
    <property type="match status" value="1"/>
</dbReference>
<dbReference type="HAMAP" id="MF_00272">
    <property type="entry name" value="GcvH"/>
    <property type="match status" value="1"/>
</dbReference>
<dbReference type="InterPro" id="IPR000089">
    <property type="entry name" value="Biotin_lipoyl"/>
</dbReference>
<dbReference type="InterPro" id="IPR002930">
    <property type="entry name" value="GCV_H"/>
</dbReference>
<dbReference type="InterPro" id="IPR033753">
    <property type="entry name" value="GCV_H/Fam206"/>
</dbReference>
<dbReference type="InterPro" id="IPR017453">
    <property type="entry name" value="GCV_H_sub"/>
</dbReference>
<dbReference type="InterPro" id="IPR011053">
    <property type="entry name" value="Single_hybrid_motif"/>
</dbReference>
<dbReference type="NCBIfam" id="TIGR00527">
    <property type="entry name" value="gcvH"/>
    <property type="match status" value="1"/>
</dbReference>
<dbReference type="NCBIfam" id="NF002270">
    <property type="entry name" value="PRK01202.1"/>
    <property type="match status" value="1"/>
</dbReference>
<dbReference type="PANTHER" id="PTHR11715">
    <property type="entry name" value="GLYCINE CLEAVAGE SYSTEM H PROTEIN"/>
    <property type="match status" value="1"/>
</dbReference>
<dbReference type="PANTHER" id="PTHR11715:SF3">
    <property type="entry name" value="GLYCINE CLEAVAGE SYSTEM H PROTEIN-RELATED"/>
    <property type="match status" value="1"/>
</dbReference>
<dbReference type="Pfam" id="PF01597">
    <property type="entry name" value="GCV_H"/>
    <property type="match status" value="1"/>
</dbReference>
<dbReference type="SUPFAM" id="SSF51230">
    <property type="entry name" value="Single hybrid motif"/>
    <property type="match status" value="1"/>
</dbReference>
<dbReference type="PROSITE" id="PS50968">
    <property type="entry name" value="BIOTINYL_LIPOYL"/>
    <property type="match status" value="1"/>
</dbReference>